<comment type="similarity">
    <text evidence="1">Belongs to the bacterial ribosomal protein bL35 family.</text>
</comment>
<sequence>MPKMKTKKSAAKRFVVRPGGTVKRGQAFKRHILTKKTTKNKRHLRGATAVHDSDLNSVRAMLPFA</sequence>
<keyword id="KW-0687">Ribonucleoprotein</keyword>
<keyword id="KW-0689">Ribosomal protein</keyword>
<proteinExistence type="inferred from homology"/>
<feature type="chain" id="PRO_0000258649" description="Large ribosomal subunit protein bL35">
    <location>
        <begin position="1"/>
        <end position="65"/>
    </location>
</feature>
<evidence type="ECO:0000255" key="1">
    <source>
        <dbReference type="HAMAP-Rule" id="MF_00514"/>
    </source>
</evidence>
<evidence type="ECO:0000305" key="2"/>
<gene>
    <name evidence="1" type="primary">rpmI</name>
    <name type="ordered locus">BURPS1710b_1892</name>
</gene>
<protein>
    <recommendedName>
        <fullName evidence="1">Large ribosomal subunit protein bL35</fullName>
    </recommendedName>
    <alternativeName>
        <fullName evidence="2">50S ribosomal protein L35</fullName>
    </alternativeName>
</protein>
<dbReference type="EMBL" id="CP000124">
    <property type="protein sequence ID" value="ABA49089.1"/>
    <property type="molecule type" value="Genomic_DNA"/>
</dbReference>
<dbReference type="RefSeq" id="WP_004191477.1">
    <property type="nucleotide sequence ID" value="NC_007434.1"/>
</dbReference>
<dbReference type="SMR" id="Q3JT11"/>
<dbReference type="EnsemblBacteria" id="ABA49089">
    <property type="protein sequence ID" value="ABA49089"/>
    <property type="gene ID" value="BURPS1710b_1892"/>
</dbReference>
<dbReference type="GeneID" id="98102115"/>
<dbReference type="KEGG" id="bpm:BURPS1710b_1892"/>
<dbReference type="HOGENOM" id="CLU_169643_1_0_4"/>
<dbReference type="Proteomes" id="UP000002700">
    <property type="component" value="Chromosome I"/>
</dbReference>
<dbReference type="GO" id="GO:0022625">
    <property type="term" value="C:cytosolic large ribosomal subunit"/>
    <property type="evidence" value="ECO:0007669"/>
    <property type="project" value="TreeGrafter"/>
</dbReference>
<dbReference type="GO" id="GO:0003735">
    <property type="term" value="F:structural constituent of ribosome"/>
    <property type="evidence" value="ECO:0007669"/>
    <property type="project" value="InterPro"/>
</dbReference>
<dbReference type="GO" id="GO:0006412">
    <property type="term" value="P:translation"/>
    <property type="evidence" value="ECO:0007669"/>
    <property type="project" value="UniProtKB-UniRule"/>
</dbReference>
<dbReference type="FunFam" id="4.10.410.60:FF:000001">
    <property type="entry name" value="50S ribosomal protein L35"/>
    <property type="match status" value="1"/>
</dbReference>
<dbReference type="Gene3D" id="4.10.410.60">
    <property type="match status" value="1"/>
</dbReference>
<dbReference type="HAMAP" id="MF_00514">
    <property type="entry name" value="Ribosomal_bL35"/>
    <property type="match status" value="1"/>
</dbReference>
<dbReference type="InterPro" id="IPR001706">
    <property type="entry name" value="Ribosomal_bL35"/>
</dbReference>
<dbReference type="InterPro" id="IPR021137">
    <property type="entry name" value="Ribosomal_bL35-like"/>
</dbReference>
<dbReference type="InterPro" id="IPR018265">
    <property type="entry name" value="Ribosomal_bL35_CS"/>
</dbReference>
<dbReference type="InterPro" id="IPR037229">
    <property type="entry name" value="Ribosomal_bL35_sf"/>
</dbReference>
<dbReference type="NCBIfam" id="TIGR00001">
    <property type="entry name" value="rpmI_bact"/>
    <property type="match status" value="1"/>
</dbReference>
<dbReference type="PANTHER" id="PTHR33343">
    <property type="entry name" value="54S RIBOSOMAL PROTEIN BL35M"/>
    <property type="match status" value="1"/>
</dbReference>
<dbReference type="PANTHER" id="PTHR33343:SF1">
    <property type="entry name" value="LARGE RIBOSOMAL SUBUNIT PROTEIN BL35M"/>
    <property type="match status" value="1"/>
</dbReference>
<dbReference type="Pfam" id="PF01632">
    <property type="entry name" value="Ribosomal_L35p"/>
    <property type="match status" value="1"/>
</dbReference>
<dbReference type="PRINTS" id="PR00064">
    <property type="entry name" value="RIBOSOMALL35"/>
</dbReference>
<dbReference type="SUPFAM" id="SSF143034">
    <property type="entry name" value="L35p-like"/>
    <property type="match status" value="1"/>
</dbReference>
<dbReference type="PROSITE" id="PS00936">
    <property type="entry name" value="RIBOSOMAL_L35"/>
    <property type="match status" value="1"/>
</dbReference>
<reference key="1">
    <citation type="journal article" date="2010" name="Genome Biol. Evol.">
        <title>Continuing evolution of Burkholderia mallei through genome reduction and large-scale rearrangements.</title>
        <authorList>
            <person name="Losada L."/>
            <person name="Ronning C.M."/>
            <person name="DeShazer D."/>
            <person name="Woods D."/>
            <person name="Fedorova N."/>
            <person name="Kim H.S."/>
            <person name="Shabalina S.A."/>
            <person name="Pearson T.R."/>
            <person name="Brinkac L."/>
            <person name="Tan P."/>
            <person name="Nandi T."/>
            <person name="Crabtree J."/>
            <person name="Badger J."/>
            <person name="Beckstrom-Sternberg S."/>
            <person name="Saqib M."/>
            <person name="Schutzer S.E."/>
            <person name="Keim P."/>
            <person name="Nierman W.C."/>
        </authorList>
    </citation>
    <scope>NUCLEOTIDE SEQUENCE [LARGE SCALE GENOMIC DNA]</scope>
    <source>
        <strain>1710b</strain>
    </source>
</reference>
<accession>Q3JT11</accession>
<organism>
    <name type="scientific">Burkholderia pseudomallei (strain 1710b)</name>
    <dbReference type="NCBI Taxonomy" id="320372"/>
    <lineage>
        <taxon>Bacteria</taxon>
        <taxon>Pseudomonadati</taxon>
        <taxon>Pseudomonadota</taxon>
        <taxon>Betaproteobacteria</taxon>
        <taxon>Burkholderiales</taxon>
        <taxon>Burkholderiaceae</taxon>
        <taxon>Burkholderia</taxon>
        <taxon>pseudomallei group</taxon>
    </lineage>
</organism>
<name>RL35_BURP1</name>